<organism>
    <name type="scientific">Ruegeria pomeroyi (strain ATCC 700808 / DSM 15171 / DSS-3)</name>
    <name type="common">Silicibacter pomeroyi</name>
    <dbReference type="NCBI Taxonomy" id="246200"/>
    <lineage>
        <taxon>Bacteria</taxon>
        <taxon>Pseudomonadati</taxon>
        <taxon>Pseudomonadota</taxon>
        <taxon>Alphaproteobacteria</taxon>
        <taxon>Rhodobacterales</taxon>
        <taxon>Roseobacteraceae</taxon>
        <taxon>Ruegeria</taxon>
    </lineage>
</organism>
<dbReference type="EC" id="2.1.1.166" evidence="1"/>
<dbReference type="EMBL" id="CP000031">
    <property type="protein sequence ID" value="AAV95137.1"/>
    <property type="molecule type" value="Genomic_DNA"/>
</dbReference>
<dbReference type="RefSeq" id="WP_011047591.1">
    <property type="nucleotide sequence ID" value="NC_003911.12"/>
</dbReference>
<dbReference type="SMR" id="Q5LSB0"/>
<dbReference type="STRING" id="246200.SPO1858"/>
<dbReference type="PaxDb" id="246200-SPO1858"/>
<dbReference type="KEGG" id="sil:SPO1858"/>
<dbReference type="eggNOG" id="COG0293">
    <property type="taxonomic scope" value="Bacteria"/>
</dbReference>
<dbReference type="HOGENOM" id="CLU_009422_4_0_5"/>
<dbReference type="OrthoDB" id="9790080at2"/>
<dbReference type="Proteomes" id="UP000001023">
    <property type="component" value="Chromosome"/>
</dbReference>
<dbReference type="GO" id="GO:0005737">
    <property type="term" value="C:cytoplasm"/>
    <property type="evidence" value="ECO:0007669"/>
    <property type="project" value="UniProtKB-SubCell"/>
</dbReference>
<dbReference type="GO" id="GO:0008650">
    <property type="term" value="F:rRNA (uridine-2'-O-)-methyltransferase activity"/>
    <property type="evidence" value="ECO:0007669"/>
    <property type="project" value="UniProtKB-UniRule"/>
</dbReference>
<dbReference type="Gene3D" id="3.40.50.150">
    <property type="entry name" value="Vaccinia Virus protein VP39"/>
    <property type="match status" value="1"/>
</dbReference>
<dbReference type="HAMAP" id="MF_01547">
    <property type="entry name" value="RNA_methyltr_E"/>
    <property type="match status" value="1"/>
</dbReference>
<dbReference type="InterPro" id="IPR050082">
    <property type="entry name" value="RNA_methyltr_RlmE"/>
</dbReference>
<dbReference type="InterPro" id="IPR002877">
    <property type="entry name" value="RNA_MeTrfase_FtsJ_dom"/>
</dbReference>
<dbReference type="InterPro" id="IPR015507">
    <property type="entry name" value="rRNA-MeTfrase_E"/>
</dbReference>
<dbReference type="InterPro" id="IPR029063">
    <property type="entry name" value="SAM-dependent_MTases_sf"/>
</dbReference>
<dbReference type="PANTHER" id="PTHR10920">
    <property type="entry name" value="RIBOSOMAL RNA METHYLTRANSFERASE"/>
    <property type="match status" value="1"/>
</dbReference>
<dbReference type="PANTHER" id="PTHR10920:SF18">
    <property type="entry name" value="RRNA METHYLTRANSFERASE 2, MITOCHONDRIAL"/>
    <property type="match status" value="1"/>
</dbReference>
<dbReference type="Pfam" id="PF01728">
    <property type="entry name" value="FtsJ"/>
    <property type="match status" value="1"/>
</dbReference>
<dbReference type="PIRSF" id="PIRSF005461">
    <property type="entry name" value="23S_rRNA_mtase"/>
    <property type="match status" value="1"/>
</dbReference>
<dbReference type="SUPFAM" id="SSF53335">
    <property type="entry name" value="S-adenosyl-L-methionine-dependent methyltransferases"/>
    <property type="match status" value="1"/>
</dbReference>
<protein>
    <recommendedName>
        <fullName evidence="1">Ribosomal RNA large subunit methyltransferase E</fullName>
        <ecNumber evidence="1">2.1.1.166</ecNumber>
    </recommendedName>
    <alternativeName>
        <fullName evidence="1">23S rRNA Um2552 methyltransferase</fullName>
    </alternativeName>
    <alternativeName>
        <fullName evidence="1">rRNA (uridine-2'-O-)-methyltransferase</fullName>
    </alternativeName>
</protein>
<reference key="1">
    <citation type="journal article" date="2004" name="Nature">
        <title>Genome sequence of Silicibacter pomeroyi reveals adaptations to the marine environment.</title>
        <authorList>
            <person name="Moran M.A."/>
            <person name="Buchan A."/>
            <person name="Gonzalez J.M."/>
            <person name="Heidelberg J.F."/>
            <person name="Whitman W.B."/>
            <person name="Kiene R.P."/>
            <person name="Henriksen J.R."/>
            <person name="King G.M."/>
            <person name="Belas R."/>
            <person name="Fuqua C."/>
            <person name="Brinkac L.M."/>
            <person name="Lewis M."/>
            <person name="Johri S."/>
            <person name="Weaver B."/>
            <person name="Pai G."/>
            <person name="Eisen J.A."/>
            <person name="Rahe E."/>
            <person name="Sheldon W.M."/>
            <person name="Ye W."/>
            <person name="Miller T.R."/>
            <person name="Carlton J."/>
            <person name="Rasko D.A."/>
            <person name="Paulsen I.T."/>
            <person name="Ren Q."/>
            <person name="Daugherty S.C."/>
            <person name="DeBoy R.T."/>
            <person name="Dodson R.J."/>
            <person name="Durkin A.S."/>
            <person name="Madupu R."/>
            <person name="Nelson W.C."/>
            <person name="Sullivan S.A."/>
            <person name="Rosovitz M.J."/>
            <person name="Haft D.H."/>
            <person name="Selengut J."/>
            <person name="Ward N."/>
        </authorList>
    </citation>
    <scope>NUCLEOTIDE SEQUENCE [LARGE SCALE GENOMIC DNA]</scope>
    <source>
        <strain>ATCC 700808 / DSM 15171 / DSS-3</strain>
    </source>
</reference>
<reference key="2">
    <citation type="journal article" date="2014" name="Stand. Genomic Sci.">
        <title>An updated genome annotation for the model marine bacterium Ruegeria pomeroyi DSS-3.</title>
        <authorList>
            <person name="Rivers A.R."/>
            <person name="Smith C.B."/>
            <person name="Moran M.A."/>
        </authorList>
    </citation>
    <scope>GENOME REANNOTATION</scope>
    <source>
        <strain>ATCC 700808 / DSM 15171 / DSS-3</strain>
    </source>
</reference>
<comment type="function">
    <text evidence="1">Specifically methylates the uridine in position 2552 of 23S rRNA at the 2'-O position of the ribose in the fully assembled 50S ribosomal subunit.</text>
</comment>
<comment type="catalytic activity">
    <reaction evidence="1">
        <text>uridine(2552) in 23S rRNA + S-adenosyl-L-methionine = 2'-O-methyluridine(2552) in 23S rRNA + S-adenosyl-L-homocysteine + H(+)</text>
        <dbReference type="Rhea" id="RHEA:42720"/>
        <dbReference type="Rhea" id="RHEA-COMP:10202"/>
        <dbReference type="Rhea" id="RHEA-COMP:10203"/>
        <dbReference type="ChEBI" id="CHEBI:15378"/>
        <dbReference type="ChEBI" id="CHEBI:57856"/>
        <dbReference type="ChEBI" id="CHEBI:59789"/>
        <dbReference type="ChEBI" id="CHEBI:65315"/>
        <dbReference type="ChEBI" id="CHEBI:74478"/>
        <dbReference type="EC" id="2.1.1.166"/>
    </reaction>
</comment>
<comment type="subcellular location">
    <subcellularLocation>
        <location evidence="1">Cytoplasm</location>
    </subcellularLocation>
</comment>
<comment type="similarity">
    <text evidence="1">Belongs to the class I-like SAM-binding methyltransferase superfamily. RNA methyltransferase RlmE family.</text>
</comment>
<name>RLME_RUEPO</name>
<accession>Q5LSB0</accession>
<feature type="chain" id="PRO_0000155542" description="Ribosomal RNA large subunit methyltransferase E">
    <location>
        <begin position="1"/>
        <end position="233"/>
    </location>
</feature>
<feature type="active site" description="Proton acceptor" evidence="1">
    <location>
        <position position="188"/>
    </location>
</feature>
<feature type="binding site" evidence="1">
    <location>
        <position position="80"/>
    </location>
    <ligand>
        <name>S-adenosyl-L-methionine</name>
        <dbReference type="ChEBI" id="CHEBI:59789"/>
    </ligand>
</feature>
<feature type="binding site" evidence="1">
    <location>
        <position position="82"/>
    </location>
    <ligand>
        <name>S-adenosyl-L-methionine</name>
        <dbReference type="ChEBI" id="CHEBI:59789"/>
    </ligand>
</feature>
<feature type="binding site" evidence="1">
    <location>
        <position position="108"/>
    </location>
    <ligand>
        <name>S-adenosyl-L-methionine</name>
        <dbReference type="ChEBI" id="CHEBI:59789"/>
    </ligand>
</feature>
<feature type="binding site" evidence="1">
    <location>
        <position position="124"/>
    </location>
    <ligand>
        <name>S-adenosyl-L-methionine</name>
        <dbReference type="ChEBI" id="CHEBI:59789"/>
    </ligand>
</feature>
<feature type="binding site" evidence="1">
    <location>
        <position position="148"/>
    </location>
    <ligand>
        <name>S-adenosyl-L-methionine</name>
        <dbReference type="ChEBI" id="CHEBI:59789"/>
    </ligand>
</feature>
<keyword id="KW-0963">Cytoplasm</keyword>
<keyword id="KW-0489">Methyltransferase</keyword>
<keyword id="KW-1185">Reference proteome</keyword>
<keyword id="KW-0698">rRNA processing</keyword>
<keyword id="KW-0949">S-adenosyl-L-methionine</keyword>
<keyword id="KW-0808">Transferase</keyword>
<gene>
    <name evidence="1" type="primary">rlmE</name>
    <name evidence="1" type="synonym">ftsJ</name>
    <name evidence="1" type="synonym">rrmJ</name>
    <name type="ordered locus">SPO1858</name>
</gene>
<sequence length="233" mass="25430">MAKNTSGRGQRDLKVKVKTARGRKLSSTRWLQRQLNDPYVKRAQAEGYRGRAAFKILELDEKYRFLVPGARVVDLGCAPGGWCQVAVKRVNALGERSDKRVGRVLGIDLQEVEPIAGAEIHQLDFLDDGADDRIKEWLGGKADVVMSDMAASSSGHKQTDHMRIIALCEAAAYLAFDVLEEGGTFVAKVLAGGAEGDLQKLLKQKFTKVANVKPPASRSDSSEKFVVATGFRG</sequence>
<evidence type="ECO:0000255" key="1">
    <source>
        <dbReference type="HAMAP-Rule" id="MF_01547"/>
    </source>
</evidence>
<proteinExistence type="inferred from homology"/>